<name>CH10_PARD8</name>
<reference key="1">
    <citation type="journal article" date="2007" name="PLoS Biol.">
        <title>Evolution of symbiotic bacteria in the distal human intestine.</title>
        <authorList>
            <person name="Xu J."/>
            <person name="Mahowald M.A."/>
            <person name="Ley R.E."/>
            <person name="Lozupone C.A."/>
            <person name="Hamady M."/>
            <person name="Martens E.C."/>
            <person name="Henrissat B."/>
            <person name="Coutinho P.M."/>
            <person name="Minx P."/>
            <person name="Latreille P."/>
            <person name="Cordum H."/>
            <person name="Van Brunt A."/>
            <person name="Kim K."/>
            <person name="Fulton R.S."/>
            <person name="Fulton L.A."/>
            <person name="Clifton S.W."/>
            <person name="Wilson R.K."/>
            <person name="Knight R.D."/>
            <person name="Gordon J.I."/>
        </authorList>
    </citation>
    <scope>NUCLEOTIDE SEQUENCE [LARGE SCALE GENOMIC DNA]</scope>
    <source>
        <strain>ATCC 8503 / DSM 20701 / CIP 104284 / JCM 5825 / NCTC 11152</strain>
    </source>
</reference>
<proteinExistence type="inferred from homology"/>
<feature type="chain" id="PRO_1000025316" description="Co-chaperonin GroES">
    <location>
        <begin position="1"/>
        <end position="89"/>
    </location>
</feature>
<protein>
    <recommendedName>
        <fullName evidence="1">Co-chaperonin GroES</fullName>
    </recommendedName>
    <alternativeName>
        <fullName evidence="1">10 kDa chaperonin</fullName>
    </alternativeName>
    <alternativeName>
        <fullName evidence="1">Chaperonin-10</fullName>
        <shortName evidence="1">Cpn10</shortName>
    </alternativeName>
</protein>
<gene>
    <name evidence="1" type="primary">groES</name>
    <name evidence="1" type="synonym">groS</name>
    <name type="ordered locus">BDI_3786</name>
</gene>
<comment type="function">
    <text evidence="1">Together with the chaperonin GroEL, plays an essential role in assisting protein folding. The GroEL-GroES system forms a nano-cage that allows encapsulation of the non-native substrate proteins and provides a physical environment optimized to promote and accelerate protein folding. GroES binds to the apical surface of the GroEL ring, thereby capping the opening of the GroEL channel.</text>
</comment>
<comment type="subunit">
    <text evidence="1">Heptamer of 7 subunits arranged in a ring. Interacts with the chaperonin GroEL.</text>
</comment>
<comment type="subcellular location">
    <subcellularLocation>
        <location evidence="1">Cytoplasm</location>
    </subcellularLocation>
</comment>
<comment type="similarity">
    <text evidence="1">Belongs to the GroES chaperonin family.</text>
</comment>
<organism>
    <name type="scientific">Parabacteroides distasonis (strain ATCC 8503 / DSM 20701 / CIP 104284 / JCM 5825 / NCTC 11152)</name>
    <dbReference type="NCBI Taxonomy" id="435591"/>
    <lineage>
        <taxon>Bacteria</taxon>
        <taxon>Pseudomonadati</taxon>
        <taxon>Bacteroidota</taxon>
        <taxon>Bacteroidia</taxon>
        <taxon>Bacteroidales</taxon>
        <taxon>Tannerellaceae</taxon>
        <taxon>Parabacteroides</taxon>
    </lineage>
</organism>
<dbReference type="EMBL" id="CP000140">
    <property type="protein sequence ID" value="ABR45473.1"/>
    <property type="molecule type" value="Genomic_DNA"/>
</dbReference>
<dbReference type="RefSeq" id="WP_005858788.1">
    <property type="nucleotide sequence ID" value="NZ_LR215978.1"/>
</dbReference>
<dbReference type="SMR" id="A6LIF9"/>
<dbReference type="STRING" id="435591.BDI_3786"/>
<dbReference type="PaxDb" id="435591-BDI_3786"/>
<dbReference type="KEGG" id="pdi:BDI_3786"/>
<dbReference type="eggNOG" id="COG0234">
    <property type="taxonomic scope" value="Bacteria"/>
</dbReference>
<dbReference type="HOGENOM" id="CLU_132825_2_0_10"/>
<dbReference type="BioCyc" id="PDIS435591:G1G5A-3883-MONOMER"/>
<dbReference type="Proteomes" id="UP000000566">
    <property type="component" value="Chromosome"/>
</dbReference>
<dbReference type="GO" id="GO:0005737">
    <property type="term" value="C:cytoplasm"/>
    <property type="evidence" value="ECO:0007669"/>
    <property type="project" value="UniProtKB-SubCell"/>
</dbReference>
<dbReference type="GO" id="GO:0005524">
    <property type="term" value="F:ATP binding"/>
    <property type="evidence" value="ECO:0007669"/>
    <property type="project" value="InterPro"/>
</dbReference>
<dbReference type="GO" id="GO:0046872">
    <property type="term" value="F:metal ion binding"/>
    <property type="evidence" value="ECO:0007669"/>
    <property type="project" value="TreeGrafter"/>
</dbReference>
<dbReference type="GO" id="GO:0044183">
    <property type="term" value="F:protein folding chaperone"/>
    <property type="evidence" value="ECO:0007669"/>
    <property type="project" value="InterPro"/>
</dbReference>
<dbReference type="GO" id="GO:0051087">
    <property type="term" value="F:protein-folding chaperone binding"/>
    <property type="evidence" value="ECO:0007669"/>
    <property type="project" value="TreeGrafter"/>
</dbReference>
<dbReference type="GO" id="GO:0051082">
    <property type="term" value="F:unfolded protein binding"/>
    <property type="evidence" value="ECO:0007669"/>
    <property type="project" value="TreeGrafter"/>
</dbReference>
<dbReference type="GO" id="GO:0051085">
    <property type="term" value="P:chaperone cofactor-dependent protein refolding"/>
    <property type="evidence" value="ECO:0007669"/>
    <property type="project" value="TreeGrafter"/>
</dbReference>
<dbReference type="CDD" id="cd00320">
    <property type="entry name" value="cpn10"/>
    <property type="match status" value="1"/>
</dbReference>
<dbReference type="FunFam" id="2.30.33.40:FF:000004">
    <property type="entry name" value="10 kDa chaperonin"/>
    <property type="match status" value="1"/>
</dbReference>
<dbReference type="Gene3D" id="2.30.33.40">
    <property type="entry name" value="GroES chaperonin"/>
    <property type="match status" value="1"/>
</dbReference>
<dbReference type="HAMAP" id="MF_00580">
    <property type="entry name" value="CH10"/>
    <property type="match status" value="1"/>
</dbReference>
<dbReference type="InterPro" id="IPR020818">
    <property type="entry name" value="Chaperonin_GroES"/>
</dbReference>
<dbReference type="InterPro" id="IPR037124">
    <property type="entry name" value="Chaperonin_GroES_sf"/>
</dbReference>
<dbReference type="InterPro" id="IPR018369">
    <property type="entry name" value="Chaprnonin_Cpn10_CS"/>
</dbReference>
<dbReference type="InterPro" id="IPR011032">
    <property type="entry name" value="GroES-like_sf"/>
</dbReference>
<dbReference type="NCBIfam" id="NF001531">
    <property type="entry name" value="PRK00364.2-2"/>
    <property type="match status" value="1"/>
</dbReference>
<dbReference type="NCBIfam" id="NF001533">
    <property type="entry name" value="PRK00364.2-4"/>
    <property type="match status" value="1"/>
</dbReference>
<dbReference type="PANTHER" id="PTHR10772">
    <property type="entry name" value="10 KDA HEAT SHOCK PROTEIN"/>
    <property type="match status" value="1"/>
</dbReference>
<dbReference type="PANTHER" id="PTHR10772:SF58">
    <property type="entry name" value="CO-CHAPERONIN GROES"/>
    <property type="match status" value="1"/>
</dbReference>
<dbReference type="Pfam" id="PF00166">
    <property type="entry name" value="Cpn10"/>
    <property type="match status" value="1"/>
</dbReference>
<dbReference type="PRINTS" id="PR00297">
    <property type="entry name" value="CHAPERONIN10"/>
</dbReference>
<dbReference type="SMART" id="SM00883">
    <property type="entry name" value="Cpn10"/>
    <property type="match status" value="1"/>
</dbReference>
<dbReference type="SUPFAM" id="SSF50129">
    <property type="entry name" value="GroES-like"/>
    <property type="match status" value="1"/>
</dbReference>
<dbReference type="PROSITE" id="PS00681">
    <property type="entry name" value="CHAPERONINS_CPN10"/>
    <property type="match status" value="1"/>
</dbReference>
<sequence>MNIRPLADRVLIKPAAAEEKTLGGIIIPDSAKEKPLKGEIVAVGNGTKDEEMVVKVGDNVLYGKYAGTEIELDGEKYLIMRQADVLAII</sequence>
<evidence type="ECO:0000255" key="1">
    <source>
        <dbReference type="HAMAP-Rule" id="MF_00580"/>
    </source>
</evidence>
<accession>A6LIF9</accession>
<keyword id="KW-0143">Chaperone</keyword>
<keyword id="KW-0963">Cytoplasm</keyword>
<keyword id="KW-1185">Reference proteome</keyword>